<reference key="1">
    <citation type="journal article" date="2002" name="Proc. Natl. Acad. Sci. U.S.A.">
        <title>Extensive mosaic structure revealed by the complete genome sequence of uropathogenic Escherichia coli.</title>
        <authorList>
            <person name="Welch R.A."/>
            <person name="Burland V."/>
            <person name="Plunkett G. III"/>
            <person name="Redford P."/>
            <person name="Roesch P."/>
            <person name="Rasko D."/>
            <person name="Buckles E.L."/>
            <person name="Liou S.-R."/>
            <person name="Boutin A."/>
            <person name="Hackett J."/>
            <person name="Stroud D."/>
            <person name="Mayhew G.F."/>
            <person name="Rose D.J."/>
            <person name="Zhou S."/>
            <person name="Schwartz D.C."/>
            <person name="Perna N.T."/>
            <person name="Mobley H.L.T."/>
            <person name="Donnenberg M.S."/>
            <person name="Blattner F.R."/>
        </authorList>
    </citation>
    <scope>NUCLEOTIDE SEQUENCE [LARGE SCALE GENOMIC DNA]</scope>
    <source>
        <strain>CFT073 / ATCC 700928 / UPEC</strain>
    </source>
</reference>
<evidence type="ECO:0000255" key="1">
    <source>
        <dbReference type="HAMAP-Rule" id="MF_00230"/>
    </source>
</evidence>
<proteinExistence type="inferred from homology"/>
<sequence>MQILADLLNTIPAINSAAMSRAQRHVDGLLKPVGSLGKLEALAIQLAGMPGLNGIPHVGKKAVLVMCADHGVWEEGVAISPKEVTAIQAENMTRGTTGVCVLAAQAGANVHVIDVGIDTAEPIPGLINMRVARGSGNIASAPAMSRRQAEKLLLDVICYTRELAKNGVTLFGVGELGMANTTPAAAIVSTITGRDPEEVVGIGANLPTDKLANKIDVVRRAITLNQPNPQDGVDVLAKVGGFDLVGIAGVMLGAASCGLPVLLDGFLSYAAALAACQMSPAIKPYLIPSHLSAEKGARIALSHLGLEPYLNMDMRLGEGSGAALAMSIIEAACAIYNNMGELAASNIVLPGNTTSDLNS</sequence>
<comment type="function">
    <text evidence="1">Catalyzes the synthesis of alpha-ribazole-5'-phosphate from nicotinate mononucleotide (NAMN) and 5,6-dimethylbenzimidazole (DMB).</text>
</comment>
<comment type="catalytic activity">
    <reaction evidence="1">
        <text>5,6-dimethylbenzimidazole + nicotinate beta-D-ribonucleotide = alpha-ribazole 5'-phosphate + nicotinate + H(+)</text>
        <dbReference type="Rhea" id="RHEA:11196"/>
        <dbReference type="ChEBI" id="CHEBI:15378"/>
        <dbReference type="ChEBI" id="CHEBI:15890"/>
        <dbReference type="ChEBI" id="CHEBI:32544"/>
        <dbReference type="ChEBI" id="CHEBI:57502"/>
        <dbReference type="ChEBI" id="CHEBI:57918"/>
        <dbReference type="EC" id="2.4.2.21"/>
    </reaction>
</comment>
<comment type="pathway">
    <text evidence="1">Nucleoside biosynthesis; alpha-ribazole biosynthesis; alpha-ribazole from 5,6-dimethylbenzimidazole: step 1/2.</text>
</comment>
<comment type="subunit">
    <text evidence="1">Homodimer.</text>
</comment>
<comment type="similarity">
    <text evidence="1">Belongs to the CobT family.</text>
</comment>
<organism>
    <name type="scientific">Escherichia coli O6:H1 (strain CFT073 / ATCC 700928 / UPEC)</name>
    <dbReference type="NCBI Taxonomy" id="199310"/>
    <lineage>
        <taxon>Bacteria</taxon>
        <taxon>Pseudomonadati</taxon>
        <taxon>Pseudomonadota</taxon>
        <taxon>Gammaproteobacteria</taxon>
        <taxon>Enterobacterales</taxon>
        <taxon>Enterobacteriaceae</taxon>
        <taxon>Escherichia</taxon>
    </lineage>
</organism>
<accession>Q8FGA5</accession>
<protein>
    <recommendedName>
        <fullName evidence="1">Nicotinate-nucleotide--dimethylbenzimidazole phosphoribosyltransferase</fullName>
        <shortName evidence="1">NN:DBI PRT</shortName>
        <ecNumber evidence="1">2.4.2.21</ecNumber>
    </recommendedName>
    <alternativeName>
        <fullName evidence="1">N(1)-alpha-phosphoribosyltransferase</fullName>
    </alternativeName>
</protein>
<dbReference type="EC" id="2.4.2.21" evidence="1"/>
<dbReference type="EMBL" id="AE014075">
    <property type="protein sequence ID" value="AAN80936.1"/>
    <property type="molecule type" value="Genomic_DNA"/>
</dbReference>
<dbReference type="RefSeq" id="WP_001166163.1">
    <property type="nucleotide sequence ID" value="NZ_CP051263.1"/>
</dbReference>
<dbReference type="SMR" id="Q8FGA5"/>
<dbReference type="STRING" id="199310.c2477"/>
<dbReference type="GeneID" id="86946915"/>
<dbReference type="KEGG" id="ecc:c2477"/>
<dbReference type="eggNOG" id="COG2038">
    <property type="taxonomic scope" value="Bacteria"/>
</dbReference>
<dbReference type="HOGENOM" id="CLU_002982_0_0_6"/>
<dbReference type="BioCyc" id="ECOL199310:C2477-MONOMER"/>
<dbReference type="UniPathway" id="UPA00061">
    <property type="reaction ID" value="UER00516"/>
</dbReference>
<dbReference type="Proteomes" id="UP000001410">
    <property type="component" value="Chromosome"/>
</dbReference>
<dbReference type="GO" id="GO:0008939">
    <property type="term" value="F:nicotinate-nucleotide-dimethylbenzimidazole phosphoribosyltransferase activity"/>
    <property type="evidence" value="ECO:0007669"/>
    <property type="project" value="UniProtKB-UniRule"/>
</dbReference>
<dbReference type="GO" id="GO:0009236">
    <property type="term" value="P:cobalamin biosynthetic process"/>
    <property type="evidence" value="ECO:0007669"/>
    <property type="project" value="UniProtKB-KW"/>
</dbReference>
<dbReference type="CDD" id="cd02439">
    <property type="entry name" value="DMB-PRT_CobT"/>
    <property type="match status" value="1"/>
</dbReference>
<dbReference type="FunFam" id="3.40.50.10210:FF:000001">
    <property type="entry name" value="Nicotinate-nucleotide--dimethylbenzimidazole phosphoribosyltransferase"/>
    <property type="match status" value="1"/>
</dbReference>
<dbReference type="Gene3D" id="1.10.1610.10">
    <property type="match status" value="2"/>
</dbReference>
<dbReference type="Gene3D" id="3.40.50.10210">
    <property type="match status" value="1"/>
</dbReference>
<dbReference type="HAMAP" id="MF_00230">
    <property type="entry name" value="CobT"/>
    <property type="match status" value="1"/>
</dbReference>
<dbReference type="InterPro" id="IPR003200">
    <property type="entry name" value="Nict_dMeBzImd_PRibTrfase"/>
</dbReference>
<dbReference type="InterPro" id="IPR017846">
    <property type="entry name" value="Nict_dMeBzImd_PRibTrfase_bact"/>
</dbReference>
<dbReference type="InterPro" id="IPR023195">
    <property type="entry name" value="Nict_dMeBzImd_PRibTrfase_N"/>
</dbReference>
<dbReference type="InterPro" id="IPR036087">
    <property type="entry name" value="Nict_dMeBzImd_PRibTrfase_sf"/>
</dbReference>
<dbReference type="NCBIfam" id="TIGR03160">
    <property type="entry name" value="cobT_DBIPRT"/>
    <property type="match status" value="1"/>
</dbReference>
<dbReference type="NCBIfam" id="NF000996">
    <property type="entry name" value="PRK00105.1"/>
    <property type="match status" value="1"/>
</dbReference>
<dbReference type="PANTHER" id="PTHR43463">
    <property type="entry name" value="NICOTINATE-NUCLEOTIDE--DIMETHYLBENZIMIDAZOLE PHOSPHORIBOSYLTRANSFERASE"/>
    <property type="match status" value="1"/>
</dbReference>
<dbReference type="PANTHER" id="PTHR43463:SF1">
    <property type="entry name" value="NICOTINATE-NUCLEOTIDE--DIMETHYLBENZIMIDAZOLE PHOSPHORIBOSYLTRANSFERASE"/>
    <property type="match status" value="1"/>
</dbReference>
<dbReference type="Pfam" id="PF02277">
    <property type="entry name" value="DBI_PRT"/>
    <property type="match status" value="1"/>
</dbReference>
<dbReference type="SUPFAM" id="SSF52733">
    <property type="entry name" value="Nicotinate mononucleotide:5,6-dimethylbenzimidazole phosphoribosyltransferase (CobT)"/>
    <property type="match status" value="1"/>
</dbReference>
<name>COBT_ECOL6</name>
<gene>
    <name evidence="1" type="primary">cobT</name>
    <name type="ordered locus">c2477</name>
</gene>
<feature type="chain" id="PRO_0000167049" description="Nicotinate-nucleotide--dimethylbenzimidazole phosphoribosyltransferase">
    <location>
        <begin position="1"/>
        <end position="359"/>
    </location>
</feature>
<feature type="active site" description="Proton acceptor" evidence="1">
    <location>
        <position position="318"/>
    </location>
</feature>
<keyword id="KW-0169">Cobalamin biosynthesis</keyword>
<keyword id="KW-0328">Glycosyltransferase</keyword>
<keyword id="KW-1185">Reference proteome</keyword>
<keyword id="KW-0808">Transferase</keyword>